<keyword id="KW-0997">Cell inner membrane</keyword>
<keyword id="KW-1003">Cell membrane</keyword>
<keyword id="KW-0472">Membrane</keyword>
<keyword id="KW-0520">NAD</keyword>
<keyword id="KW-0874">Quinone</keyword>
<keyword id="KW-1278">Translocase</keyword>
<keyword id="KW-0813">Transport</keyword>
<keyword id="KW-0830">Ubiquinone</keyword>
<accession>A1W4M5</accession>
<organism>
    <name type="scientific">Acidovorax sp. (strain JS42)</name>
    <dbReference type="NCBI Taxonomy" id="232721"/>
    <lineage>
        <taxon>Bacteria</taxon>
        <taxon>Pseudomonadati</taxon>
        <taxon>Pseudomonadota</taxon>
        <taxon>Betaproteobacteria</taxon>
        <taxon>Burkholderiales</taxon>
        <taxon>Comamonadaceae</taxon>
        <taxon>Acidovorax</taxon>
    </lineage>
</organism>
<feature type="chain" id="PRO_0000357752" description="NADH-quinone oxidoreductase subunit D">
    <location>
        <begin position="1"/>
        <end position="417"/>
    </location>
</feature>
<proteinExistence type="inferred from homology"/>
<sequence length="417" mass="47436">MAEIKNYSLNFGPQHPAAHGVLRLVLELDGEVVQRADPHIGLLHRATEKLAEHKTYIQSLPYMDRLDYVSMMCNEQAYCLAIEKMLGIEVPLRAKYIRTMFGEITRLLNHLMWLGSHGNDCGSSTILIYTFREREDLFDMYEAVSGARMHAAYFRPGGVYRDLPDSMAQYKVSKIKNAKAIEELNRNRQGSLLDFIDDFTQRFPKCVDEYETLLTDNRIWKQRTVGIGVVPAERALNLGMTGPMLRGSGIAWDLRKKQPYDAYDRVDFDVPVGVTGDSYDRYLVRVQEMRESNRIIKQCVDWLRANPGPVITDNHKIAPPSREAMKSNMEELIHHFKLFTEGFRVPAGEAYAAVEHPKGEFGIYMVSDGANKPYRLKIRAPGFAHLATLDEMARGHMLADAVAIIGTMDIVFGEIDR</sequence>
<comment type="function">
    <text evidence="1">NDH-1 shuttles electrons from NADH, via FMN and iron-sulfur (Fe-S) centers, to quinones in the respiratory chain. The immediate electron acceptor for the enzyme in this species is believed to be ubiquinone. Couples the redox reaction to proton translocation (for every two electrons transferred, four hydrogen ions are translocated across the cytoplasmic membrane), and thus conserves the redox energy in a proton gradient.</text>
</comment>
<comment type="catalytic activity">
    <reaction evidence="1">
        <text>a quinone + NADH + 5 H(+)(in) = a quinol + NAD(+) + 4 H(+)(out)</text>
        <dbReference type="Rhea" id="RHEA:57888"/>
        <dbReference type="ChEBI" id="CHEBI:15378"/>
        <dbReference type="ChEBI" id="CHEBI:24646"/>
        <dbReference type="ChEBI" id="CHEBI:57540"/>
        <dbReference type="ChEBI" id="CHEBI:57945"/>
        <dbReference type="ChEBI" id="CHEBI:132124"/>
    </reaction>
</comment>
<comment type="subunit">
    <text evidence="1">NDH-1 is composed of 14 different subunits. Subunits NuoB, C, D, E, F, and G constitute the peripheral sector of the complex.</text>
</comment>
<comment type="subcellular location">
    <subcellularLocation>
        <location evidence="1">Cell inner membrane</location>
        <topology evidence="1">Peripheral membrane protein</topology>
        <orientation evidence="1">Cytoplasmic side</orientation>
    </subcellularLocation>
</comment>
<comment type="similarity">
    <text evidence="1">Belongs to the complex I 49 kDa subunit family.</text>
</comment>
<evidence type="ECO:0000255" key="1">
    <source>
        <dbReference type="HAMAP-Rule" id="MF_01358"/>
    </source>
</evidence>
<name>NUOD_ACISJ</name>
<reference key="1">
    <citation type="submission" date="2006-12" db="EMBL/GenBank/DDBJ databases">
        <title>Complete sequence of chromosome 1 of Acidovorax sp. JS42.</title>
        <authorList>
            <person name="Copeland A."/>
            <person name="Lucas S."/>
            <person name="Lapidus A."/>
            <person name="Barry K."/>
            <person name="Detter J.C."/>
            <person name="Glavina del Rio T."/>
            <person name="Dalin E."/>
            <person name="Tice H."/>
            <person name="Pitluck S."/>
            <person name="Chertkov O."/>
            <person name="Brettin T."/>
            <person name="Bruce D."/>
            <person name="Han C."/>
            <person name="Tapia R."/>
            <person name="Gilna P."/>
            <person name="Schmutz J."/>
            <person name="Larimer F."/>
            <person name="Land M."/>
            <person name="Hauser L."/>
            <person name="Kyrpides N."/>
            <person name="Kim E."/>
            <person name="Stahl D."/>
            <person name="Richardson P."/>
        </authorList>
    </citation>
    <scope>NUCLEOTIDE SEQUENCE [LARGE SCALE GENOMIC DNA]</scope>
    <source>
        <strain>JS42</strain>
    </source>
</reference>
<dbReference type="EC" id="7.1.1.-" evidence="1"/>
<dbReference type="EMBL" id="CP000539">
    <property type="protein sequence ID" value="ABM41200.1"/>
    <property type="molecule type" value="Genomic_DNA"/>
</dbReference>
<dbReference type="SMR" id="A1W4M5"/>
<dbReference type="STRING" id="232721.Ajs_0960"/>
<dbReference type="KEGG" id="ajs:Ajs_0960"/>
<dbReference type="eggNOG" id="COG0649">
    <property type="taxonomic scope" value="Bacteria"/>
</dbReference>
<dbReference type="HOGENOM" id="CLU_015134_1_1_4"/>
<dbReference type="Proteomes" id="UP000000645">
    <property type="component" value="Chromosome"/>
</dbReference>
<dbReference type="GO" id="GO:0005886">
    <property type="term" value="C:plasma membrane"/>
    <property type="evidence" value="ECO:0007669"/>
    <property type="project" value="UniProtKB-SubCell"/>
</dbReference>
<dbReference type="GO" id="GO:0051287">
    <property type="term" value="F:NAD binding"/>
    <property type="evidence" value="ECO:0007669"/>
    <property type="project" value="InterPro"/>
</dbReference>
<dbReference type="GO" id="GO:0050136">
    <property type="term" value="F:NADH:ubiquinone reductase (non-electrogenic) activity"/>
    <property type="evidence" value="ECO:0007669"/>
    <property type="project" value="UniProtKB-UniRule"/>
</dbReference>
<dbReference type="GO" id="GO:0048038">
    <property type="term" value="F:quinone binding"/>
    <property type="evidence" value="ECO:0007669"/>
    <property type="project" value="UniProtKB-KW"/>
</dbReference>
<dbReference type="FunFam" id="1.10.645.10:FF:000005">
    <property type="entry name" value="NADH-quinone oxidoreductase subunit D"/>
    <property type="match status" value="1"/>
</dbReference>
<dbReference type="Gene3D" id="1.10.645.10">
    <property type="entry name" value="Cytochrome-c3 Hydrogenase, chain B"/>
    <property type="match status" value="1"/>
</dbReference>
<dbReference type="HAMAP" id="MF_01358">
    <property type="entry name" value="NDH1_NuoD"/>
    <property type="match status" value="1"/>
</dbReference>
<dbReference type="InterPro" id="IPR001135">
    <property type="entry name" value="NADH_Q_OxRdtase_suD"/>
</dbReference>
<dbReference type="InterPro" id="IPR014029">
    <property type="entry name" value="NADH_UbQ_OxRdtase_49kDa_CS"/>
</dbReference>
<dbReference type="InterPro" id="IPR022885">
    <property type="entry name" value="NDH1_su_D/H"/>
</dbReference>
<dbReference type="InterPro" id="IPR029014">
    <property type="entry name" value="NiFe-Hase_large"/>
</dbReference>
<dbReference type="NCBIfam" id="TIGR01962">
    <property type="entry name" value="NuoD"/>
    <property type="match status" value="1"/>
</dbReference>
<dbReference type="NCBIfam" id="NF004739">
    <property type="entry name" value="PRK06075.1"/>
    <property type="match status" value="1"/>
</dbReference>
<dbReference type="PANTHER" id="PTHR11993:SF10">
    <property type="entry name" value="NADH DEHYDROGENASE [UBIQUINONE] IRON-SULFUR PROTEIN 2, MITOCHONDRIAL"/>
    <property type="match status" value="1"/>
</dbReference>
<dbReference type="PANTHER" id="PTHR11993">
    <property type="entry name" value="NADH-UBIQUINONE OXIDOREDUCTASE 49 KDA SUBUNIT"/>
    <property type="match status" value="1"/>
</dbReference>
<dbReference type="Pfam" id="PF00346">
    <property type="entry name" value="Complex1_49kDa"/>
    <property type="match status" value="2"/>
</dbReference>
<dbReference type="SUPFAM" id="SSF56762">
    <property type="entry name" value="HydB/Nqo4-like"/>
    <property type="match status" value="1"/>
</dbReference>
<dbReference type="PROSITE" id="PS00535">
    <property type="entry name" value="COMPLEX1_49K"/>
    <property type="match status" value="1"/>
</dbReference>
<protein>
    <recommendedName>
        <fullName evidence="1">NADH-quinone oxidoreductase subunit D</fullName>
        <ecNumber evidence="1">7.1.1.-</ecNumber>
    </recommendedName>
    <alternativeName>
        <fullName evidence="1">NADH dehydrogenase I subunit D</fullName>
    </alternativeName>
    <alternativeName>
        <fullName evidence="1">NDH-1 subunit D</fullName>
    </alternativeName>
</protein>
<gene>
    <name evidence="1" type="primary">nuoD</name>
    <name type="ordered locus">Ajs_0960</name>
</gene>